<evidence type="ECO:0000255" key="1">
    <source>
        <dbReference type="HAMAP-Rule" id="MF_00104"/>
    </source>
</evidence>
<evidence type="ECO:0000256" key="2">
    <source>
        <dbReference type="SAM" id="MobiDB-lite"/>
    </source>
</evidence>
<protein>
    <recommendedName>
        <fullName evidence="1">Ribonuclease 3</fullName>
        <ecNumber evidence="1">3.1.26.3</ecNumber>
    </recommendedName>
    <alternativeName>
        <fullName evidence="1">Ribonuclease III</fullName>
        <shortName evidence="1">RNase III</shortName>
    </alternativeName>
</protein>
<feature type="chain" id="PRO_1000094118" description="Ribonuclease 3">
    <location>
        <begin position="1"/>
        <end position="233"/>
    </location>
</feature>
<feature type="domain" description="RNase III" evidence="1">
    <location>
        <begin position="6"/>
        <end position="135"/>
    </location>
</feature>
<feature type="domain" description="DRBM" evidence="1">
    <location>
        <begin position="161"/>
        <end position="230"/>
    </location>
</feature>
<feature type="region of interest" description="Disordered" evidence="2">
    <location>
        <begin position="205"/>
        <end position="233"/>
    </location>
</feature>
<feature type="active site" evidence="1">
    <location>
        <position position="52"/>
    </location>
</feature>
<feature type="active site" evidence="1">
    <location>
        <position position="124"/>
    </location>
</feature>
<feature type="binding site" evidence="1">
    <location>
        <position position="48"/>
    </location>
    <ligand>
        <name>Mg(2+)</name>
        <dbReference type="ChEBI" id="CHEBI:18420"/>
    </ligand>
</feature>
<feature type="binding site" evidence="1">
    <location>
        <position position="121"/>
    </location>
    <ligand>
        <name>Mg(2+)</name>
        <dbReference type="ChEBI" id="CHEBI:18420"/>
    </ligand>
</feature>
<feature type="binding site" evidence="1">
    <location>
        <position position="124"/>
    </location>
    <ligand>
        <name>Mg(2+)</name>
        <dbReference type="ChEBI" id="CHEBI:18420"/>
    </ligand>
</feature>
<organism>
    <name type="scientific">Limosilactobacillus reuteri subsp. reuteri (strain JCM 1112)</name>
    <name type="common">Lactobacillus reuteri</name>
    <dbReference type="NCBI Taxonomy" id="557433"/>
    <lineage>
        <taxon>Bacteria</taxon>
        <taxon>Bacillati</taxon>
        <taxon>Bacillota</taxon>
        <taxon>Bacilli</taxon>
        <taxon>Lactobacillales</taxon>
        <taxon>Lactobacillaceae</taxon>
        <taxon>Limosilactobacillus</taxon>
    </lineage>
</organism>
<comment type="function">
    <text evidence="1">Digests double-stranded RNA. Involved in the processing of primary rRNA transcript to yield the immediate precursors to the large and small rRNAs (23S and 16S). Processes some mRNAs, and tRNAs when they are encoded in the rRNA operon. Processes pre-crRNA and tracrRNA of type II CRISPR loci if present in the organism.</text>
</comment>
<comment type="catalytic activity">
    <reaction evidence="1">
        <text>Endonucleolytic cleavage to 5'-phosphomonoester.</text>
        <dbReference type="EC" id="3.1.26.3"/>
    </reaction>
</comment>
<comment type="cofactor">
    <cofactor evidence="1">
        <name>Mg(2+)</name>
        <dbReference type="ChEBI" id="CHEBI:18420"/>
    </cofactor>
</comment>
<comment type="subunit">
    <text evidence="1">Homodimer.</text>
</comment>
<comment type="subcellular location">
    <subcellularLocation>
        <location evidence="1">Cytoplasm</location>
    </subcellularLocation>
</comment>
<comment type="similarity">
    <text evidence="1">Belongs to the ribonuclease III family.</text>
</comment>
<reference key="1">
    <citation type="journal article" date="2008" name="DNA Res.">
        <title>Comparative genome analysis of Lactobacillus reuteri and Lactobacillus fermentum reveal a genomic island for reuterin and cobalamin production.</title>
        <authorList>
            <person name="Morita H."/>
            <person name="Toh H."/>
            <person name="Fukuda S."/>
            <person name="Horikawa H."/>
            <person name="Oshima K."/>
            <person name="Suzuki T."/>
            <person name="Murakami M."/>
            <person name="Hisamatsu S."/>
            <person name="Kato Y."/>
            <person name="Takizawa T."/>
            <person name="Fukuoka H."/>
            <person name="Yoshimura T."/>
            <person name="Itoh K."/>
            <person name="O'Sullivan D.J."/>
            <person name="McKay L.L."/>
            <person name="Ohno H."/>
            <person name="Kikuchi J."/>
            <person name="Masaoka T."/>
            <person name="Hattori M."/>
        </authorList>
    </citation>
    <scope>NUCLEOTIDE SEQUENCE [LARGE SCALE GENOMIC DNA]</scope>
    <source>
        <strain>JCM 1112</strain>
    </source>
</reference>
<accession>B2G826</accession>
<keyword id="KW-0963">Cytoplasm</keyword>
<keyword id="KW-0255">Endonuclease</keyword>
<keyword id="KW-0378">Hydrolase</keyword>
<keyword id="KW-0460">Magnesium</keyword>
<keyword id="KW-0479">Metal-binding</keyword>
<keyword id="KW-0507">mRNA processing</keyword>
<keyword id="KW-0540">Nuclease</keyword>
<keyword id="KW-0694">RNA-binding</keyword>
<keyword id="KW-0698">rRNA processing</keyword>
<keyword id="KW-0699">rRNA-binding</keyword>
<keyword id="KW-0819">tRNA processing</keyword>
<proteinExistence type="inferred from homology"/>
<name>RNC_LIMRJ</name>
<gene>
    <name evidence="1" type="primary">rnc</name>
    <name type="ordered locus">LAR_1092</name>
</gene>
<sequence length="233" mass="26606">MIEELQDYLAKEFNIHFDNPALLAEAFTQASYVNEHPNQGLKYYERIEFLGDAVLELIVSEYIYKRFPELPQGKLTRLRAAMVCEDSFSKFAKECHFDQYIRLGHGEEMAGARERPGLLCDIFESFIGALYLDQGRPAVEKFVQRVIFPKLDMGWFDHAVDAKTSLQEFLQRDGDIAIEYHLVEESGTENDPEFKVNVTANGDVIGEGKGSSKKHAEMQAAQQALDNMRNKNK</sequence>
<dbReference type="EC" id="3.1.26.3" evidence="1"/>
<dbReference type="EMBL" id="AP007281">
    <property type="protein sequence ID" value="BAG25608.1"/>
    <property type="molecule type" value="Genomic_DNA"/>
</dbReference>
<dbReference type="RefSeq" id="WP_003663822.1">
    <property type="nucleotide sequence ID" value="NC_010609.1"/>
</dbReference>
<dbReference type="SMR" id="B2G826"/>
<dbReference type="GeneID" id="77191828"/>
<dbReference type="KEGG" id="lrf:LAR_1092"/>
<dbReference type="HOGENOM" id="CLU_000907_1_3_9"/>
<dbReference type="GO" id="GO:0005737">
    <property type="term" value="C:cytoplasm"/>
    <property type="evidence" value="ECO:0007669"/>
    <property type="project" value="UniProtKB-SubCell"/>
</dbReference>
<dbReference type="GO" id="GO:0003725">
    <property type="term" value="F:double-stranded RNA binding"/>
    <property type="evidence" value="ECO:0007669"/>
    <property type="project" value="TreeGrafter"/>
</dbReference>
<dbReference type="GO" id="GO:0046872">
    <property type="term" value="F:metal ion binding"/>
    <property type="evidence" value="ECO:0007669"/>
    <property type="project" value="UniProtKB-KW"/>
</dbReference>
<dbReference type="GO" id="GO:0004525">
    <property type="term" value="F:ribonuclease III activity"/>
    <property type="evidence" value="ECO:0007669"/>
    <property type="project" value="UniProtKB-UniRule"/>
</dbReference>
<dbReference type="GO" id="GO:0019843">
    <property type="term" value="F:rRNA binding"/>
    <property type="evidence" value="ECO:0007669"/>
    <property type="project" value="UniProtKB-KW"/>
</dbReference>
<dbReference type="GO" id="GO:0006397">
    <property type="term" value="P:mRNA processing"/>
    <property type="evidence" value="ECO:0007669"/>
    <property type="project" value="UniProtKB-UniRule"/>
</dbReference>
<dbReference type="GO" id="GO:0010468">
    <property type="term" value="P:regulation of gene expression"/>
    <property type="evidence" value="ECO:0007669"/>
    <property type="project" value="TreeGrafter"/>
</dbReference>
<dbReference type="GO" id="GO:0006364">
    <property type="term" value="P:rRNA processing"/>
    <property type="evidence" value="ECO:0007669"/>
    <property type="project" value="UniProtKB-UniRule"/>
</dbReference>
<dbReference type="GO" id="GO:0008033">
    <property type="term" value="P:tRNA processing"/>
    <property type="evidence" value="ECO:0007669"/>
    <property type="project" value="UniProtKB-KW"/>
</dbReference>
<dbReference type="CDD" id="cd10845">
    <property type="entry name" value="DSRM_RNAse_III_family"/>
    <property type="match status" value="1"/>
</dbReference>
<dbReference type="CDD" id="cd00593">
    <property type="entry name" value="RIBOc"/>
    <property type="match status" value="1"/>
</dbReference>
<dbReference type="FunFam" id="1.10.1520.10:FF:000001">
    <property type="entry name" value="Ribonuclease 3"/>
    <property type="match status" value="1"/>
</dbReference>
<dbReference type="FunFam" id="3.30.160.20:FF:000003">
    <property type="entry name" value="Ribonuclease 3"/>
    <property type="match status" value="1"/>
</dbReference>
<dbReference type="Gene3D" id="3.30.160.20">
    <property type="match status" value="1"/>
</dbReference>
<dbReference type="Gene3D" id="1.10.1520.10">
    <property type="entry name" value="Ribonuclease III domain"/>
    <property type="match status" value="1"/>
</dbReference>
<dbReference type="HAMAP" id="MF_00104">
    <property type="entry name" value="RNase_III"/>
    <property type="match status" value="1"/>
</dbReference>
<dbReference type="InterPro" id="IPR014720">
    <property type="entry name" value="dsRBD_dom"/>
</dbReference>
<dbReference type="InterPro" id="IPR011907">
    <property type="entry name" value="RNase_III"/>
</dbReference>
<dbReference type="InterPro" id="IPR000999">
    <property type="entry name" value="RNase_III_dom"/>
</dbReference>
<dbReference type="InterPro" id="IPR036389">
    <property type="entry name" value="RNase_III_sf"/>
</dbReference>
<dbReference type="NCBIfam" id="TIGR02191">
    <property type="entry name" value="RNaseIII"/>
    <property type="match status" value="1"/>
</dbReference>
<dbReference type="PANTHER" id="PTHR11207:SF0">
    <property type="entry name" value="RIBONUCLEASE 3"/>
    <property type="match status" value="1"/>
</dbReference>
<dbReference type="PANTHER" id="PTHR11207">
    <property type="entry name" value="RIBONUCLEASE III"/>
    <property type="match status" value="1"/>
</dbReference>
<dbReference type="Pfam" id="PF00035">
    <property type="entry name" value="dsrm"/>
    <property type="match status" value="1"/>
</dbReference>
<dbReference type="Pfam" id="PF14622">
    <property type="entry name" value="Ribonucleas_3_3"/>
    <property type="match status" value="1"/>
</dbReference>
<dbReference type="SMART" id="SM00358">
    <property type="entry name" value="DSRM"/>
    <property type="match status" value="1"/>
</dbReference>
<dbReference type="SMART" id="SM00535">
    <property type="entry name" value="RIBOc"/>
    <property type="match status" value="1"/>
</dbReference>
<dbReference type="SUPFAM" id="SSF54768">
    <property type="entry name" value="dsRNA-binding domain-like"/>
    <property type="match status" value="1"/>
</dbReference>
<dbReference type="SUPFAM" id="SSF69065">
    <property type="entry name" value="RNase III domain-like"/>
    <property type="match status" value="1"/>
</dbReference>
<dbReference type="PROSITE" id="PS50137">
    <property type="entry name" value="DS_RBD"/>
    <property type="match status" value="1"/>
</dbReference>
<dbReference type="PROSITE" id="PS50142">
    <property type="entry name" value="RNASE_3_2"/>
    <property type="match status" value="1"/>
</dbReference>